<dbReference type="EMBL" id="L42023">
    <property type="protein sequence ID" value="AAC22899.1"/>
    <property type="molecule type" value="Genomic_DNA"/>
</dbReference>
<dbReference type="PIR" id="H64022">
    <property type="entry name" value="H64022"/>
</dbReference>
<dbReference type="RefSeq" id="NP_439400.1">
    <property type="nucleotide sequence ID" value="NC_000907.1"/>
</dbReference>
<dbReference type="SMR" id="P44134"/>
<dbReference type="STRING" id="71421.HI_1244"/>
<dbReference type="DNASU" id="950183"/>
<dbReference type="EnsemblBacteria" id="AAC22899">
    <property type="protein sequence ID" value="AAC22899"/>
    <property type="gene ID" value="HI_1244"/>
</dbReference>
<dbReference type="KEGG" id="hin:HI_1244"/>
<dbReference type="PATRIC" id="fig|71421.8.peg.1296"/>
<dbReference type="eggNOG" id="COG3955">
    <property type="taxonomic scope" value="Bacteria"/>
</dbReference>
<dbReference type="HOGENOM" id="CLU_113266_0_0_6"/>
<dbReference type="OrthoDB" id="6636518at2"/>
<dbReference type="BioCyc" id="HINF71421:G1GJ1-1274-MONOMER"/>
<dbReference type="Proteomes" id="UP000000579">
    <property type="component" value="Chromosome"/>
</dbReference>
<dbReference type="InterPro" id="IPR037226">
    <property type="entry name" value="CAC2185-like_sf"/>
</dbReference>
<dbReference type="InterPro" id="IPR015037">
    <property type="entry name" value="DUF1919"/>
</dbReference>
<dbReference type="Pfam" id="PF08942">
    <property type="entry name" value="DUF1919"/>
    <property type="match status" value="1"/>
</dbReference>
<dbReference type="SUPFAM" id="SSF142795">
    <property type="entry name" value="CAC2185-like"/>
    <property type="match status" value="1"/>
</dbReference>
<protein>
    <recommendedName>
        <fullName>Uncharacterized protein HI_1244</fullName>
    </recommendedName>
</protein>
<proteinExistence type="predicted"/>
<reference key="1">
    <citation type="journal article" date="1995" name="Science">
        <title>Whole-genome random sequencing and assembly of Haemophilus influenzae Rd.</title>
        <authorList>
            <person name="Fleischmann R.D."/>
            <person name="Adams M.D."/>
            <person name="White O."/>
            <person name="Clayton R.A."/>
            <person name="Kirkness E.F."/>
            <person name="Kerlavage A.R."/>
            <person name="Bult C.J."/>
            <person name="Tomb J.-F."/>
            <person name="Dougherty B.A."/>
            <person name="Merrick J.M."/>
            <person name="McKenney K."/>
            <person name="Sutton G.G."/>
            <person name="FitzHugh W."/>
            <person name="Fields C.A."/>
            <person name="Gocayne J.D."/>
            <person name="Scott J.D."/>
            <person name="Shirley R."/>
            <person name="Liu L.-I."/>
            <person name="Glodek A."/>
            <person name="Kelley J.M."/>
            <person name="Weidman J.F."/>
            <person name="Phillips C.A."/>
            <person name="Spriggs T."/>
            <person name="Hedblom E."/>
            <person name="Cotton M.D."/>
            <person name="Utterback T.R."/>
            <person name="Hanna M.C."/>
            <person name="Nguyen D.T."/>
            <person name="Saudek D.M."/>
            <person name="Brandon R.C."/>
            <person name="Fine L.D."/>
            <person name="Fritchman J.L."/>
            <person name="Fuhrmann J.L."/>
            <person name="Geoghagen N.S.M."/>
            <person name="Gnehm C.L."/>
            <person name="McDonald L.A."/>
            <person name="Small K.V."/>
            <person name="Fraser C.M."/>
            <person name="Smith H.O."/>
            <person name="Venter J.C."/>
        </authorList>
    </citation>
    <scope>NUCLEOTIDE SEQUENCE [LARGE SCALE GENOMIC DNA]</scope>
    <source>
        <strain>ATCC 51907 / DSM 11121 / KW20 / Rd</strain>
    </source>
</reference>
<organism>
    <name type="scientific">Haemophilus influenzae (strain ATCC 51907 / DSM 11121 / KW20 / Rd)</name>
    <dbReference type="NCBI Taxonomy" id="71421"/>
    <lineage>
        <taxon>Bacteria</taxon>
        <taxon>Pseudomonadati</taxon>
        <taxon>Pseudomonadota</taxon>
        <taxon>Gammaproteobacteria</taxon>
        <taxon>Pasteurellales</taxon>
        <taxon>Pasteurellaceae</taxon>
        <taxon>Haemophilus</taxon>
    </lineage>
</organism>
<keyword id="KW-1185">Reference proteome</keyword>
<gene>
    <name type="ordered locus">HI_1244</name>
</gene>
<feature type="chain" id="PRO_0000078012" description="Uncharacterized protein HI_1244">
    <location>
        <begin position="1"/>
        <end position="206"/>
    </location>
</feature>
<accession>P44134</accession>
<name>Y1244_HAEIN</name>
<sequence>MNPFQKIKSAVNKRQRFFINRTLQRKLTNQGMTVISANCVGAFILHDLHQPFNSPFVNLYLSPQDFLRYLQNIDFYLTQPLTFVQTEKSYPVGKLADLEIHFMHYHSEQEANEKWQLRTSRMKLDNLFIMMTDRDGVTEKDIQLFDQLPFKNKVIFTHKPYPAFKSAYYIKGFEKQNQVGDIFEFSGWNGKKYYDQFDYVKWFNHA</sequence>